<proteinExistence type="inferred from homology"/>
<sequence length="238" mass="24992">MADLQTQMKQAVAAAAVEQIKDGMVLGLGSGSTAALMIQALGAKLASGELREIVGVTTSFQGEVMAAELGIPLRNLTAVDRIDLAIDGADEVDPSFQLIKGGGACHVQEKLVASRADRFVVVVDSTKIVDRLNLGFLLPVEVLPGAWRQVQGRLAELGGIADLRMAQCKAGPVVTDQGNLVLDVSMAGGIGDPEDLECRINNLPGVLENGLFVNLTDEVLVGQISDGVAGVRRLQRRE</sequence>
<protein>
    <recommendedName>
        <fullName evidence="1">Ribose-5-phosphate isomerase A</fullName>
        <ecNumber evidence="1">5.3.1.6</ecNumber>
    </recommendedName>
    <alternativeName>
        <fullName evidence="1">Phosphoriboisomerase A</fullName>
        <shortName evidence="1">PRI</shortName>
    </alternativeName>
</protein>
<feature type="chain" id="PRO_1000016958" description="Ribose-5-phosphate isomerase A">
    <location>
        <begin position="1"/>
        <end position="238"/>
    </location>
</feature>
<feature type="active site" description="Proton acceptor" evidence="1">
    <location>
        <position position="109"/>
    </location>
</feature>
<feature type="binding site" evidence="1">
    <location>
        <begin position="30"/>
        <end position="33"/>
    </location>
    <ligand>
        <name>substrate</name>
    </ligand>
</feature>
<feature type="binding site" evidence="1">
    <location>
        <begin position="87"/>
        <end position="90"/>
    </location>
    <ligand>
        <name>substrate</name>
    </ligand>
</feature>
<feature type="binding site" evidence="1">
    <location>
        <begin position="100"/>
        <end position="103"/>
    </location>
    <ligand>
        <name>substrate</name>
    </ligand>
</feature>
<feature type="binding site" evidence="1">
    <location>
        <position position="127"/>
    </location>
    <ligand>
        <name>substrate</name>
    </ligand>
</feature>
<dbReference type="EC" id="5.3.1.6" evidence="1"/>
<dbReference type="EMBL" id="CP000554">
    <property type="protein sequence ID" value="ABM77184.1"/>
    <property type="molecule type" value="Genomic_DNA"/>
</dbReference>
<dbReference type="RefSeq" id="WP_011825109.1">
    <property type="nucleotide sequence ID" value="NC_008820.1"/>
</dbReference>
<dbReference type="SMR" id="A2C6S4"/>
<dbReference type="STRING" id="59922.P9303_04321"/>
<dbReference type="KEGG" id="pmf:P9303_04321"/>
<dbReference type="HOGENOM" id="CLU_056590_1_1_3"/>
<dbReference type="BioCyc" id="PMAR59922:G1G80-401-MONOMER"/>
<dbReference type="UniPathway" id="UPA00115">
    <property type="reaction ID" value="UER00412"/>
</dbReference>
<dbReference type="Proteomes" id="UP000002274">
    <property type="component" value="Chromosome"/>
</dbReference>
<dbReference type="GO" id="GO:0005829">
    <property type="term" value="C:cytosol"/>
    <property type="evidence" value="ECO:0007669"/>
    <property type="project" value="TreeGrafter"/>
</dbReference>
<dbReference type="GO" id="GO:0004751">
    <property type="term" value="F:ribose-5-phosphate isomerase activity"/>
    <property type="evidence" value="ECO:0007669"/>
    <property type="project" value="UniProtKB-UniRule"/>
</dbReference>
<dbReference type="GO" id="GO:0006014">
    <property type="term" value="P:D-ribose metabolic process"/>
    <property type="evidence" value="ECO:0007669"/>
    <property type="project" value="TreeGrafter"/>
</dbReference>
<dbReference type="GO" id="GO:0009052">
    <property type="term" value="P:pentose-phosphate shunt, non-oxidative branch"/>
    <property type="evidence" value="ECO:0007669"/>
    <property type="project" value="UniProtKB-UniRule"/>
</dbReference>
<dbReference type="CDD" id="cd01398">
    <property type="entry name" value="RPI_A"/>
    <property type="match status" value="1"/>
</dbReference>
<dbReference type="FunFam" id="3.30.70.260:FF:000018">
    <property type="entry name" value="Ribose-5-phosphate isomerase A"/>
    <property type="match status" value="1"/>
</dbReference>
<dbReference type="FunFam" id="3.40.50.1360:FF:000001">
    <property type="entry name" value="Ribose-5-phosphate isomerase A"/>
    <property type="match status" value="1"/>
</dbReference>
<dbReference type="Gene3D" id="3.30.70.260">
    <property type="match status" value="1"/>
</dbReference>
<dbReference type="Gene3D" id="3.40.50.1360">
    <property type="match status" value="1"/>
</dbReference>
<dbReference type="HAMAP" id="MF_00170">
    <property type="entry name" value="Rib_5P_isom_A"/>
    <property type="match status" value="1"/>
</dbReference>
<dbReference type="InterPro" id="IPR037171">
    <property type="entry name" value="NagB/RpiA_transferase-like"/>
</dbReference>
<dbReference type="InterPro" id="IPR020672">
    <property type="entry name" value="Ribose5P_isomerase_typA_subgr"/>
</dbReference>
<dbReference type="InterPro" id="IPR004788">
    <property type="entry name" value="Ribose5P_isomerase_type_A"/>
</dbReference>
<dbReference type="NCBIfam" id="NF001924">
    <property type="entry name" value="PRK00702.1"/>
    <property type="match status" value="1"/>
</dbReference>
<dbReference type="NCBIfam" id="TIGR00021">
    <property type="entry name" value="rpiA"/>
    <property type="match status" value="1"/>
</dbReference>
<dbReference type="PANTHER" id="PTHR11934">
    <property type="entry name" value="RIBOSE-5-PHOSPHATE ISOMERASE"/>
    <property type="match status" value="1"/>
</dbReference>
<dbReference type="PANTHER" id="PTHR11934:SF0">
    <property type="entry name" value="RIBOSE-5-PHOSPHATE ISOMERASE"/>
    <property type="match status" value="1"/>
</dbReference>
<dbReference type="Pfam" id="PF06026">
    <property type="entry name" value="Rib_5-P_isom_A"/>
    <property type="match status" value="1"/>
</dbReference>
<dbReference type="SMART" id="SM01134">
    <property type="entry name" value="DeoRC"/>
    <property type="match status" value="1"/>
</dbReference>
<dbReference type="SUPFAM" id="SSF75445">
    <property type="entry name" value="D-ribose-5-phosphate isomerase (RpiA), lid domain"/>
    <property type="match status" value="1"/>
</dbReference>
<dbReference type="SUPFAM" id="SSF100950">
    <property type="entry name" value="NagB/RpiA/CoA transferase-like"/>
    <property type="match status" value="1"/>
</dbReference>
<comment type="function">
    <text evidence="1">Catalyzes the reversible conversion of ribose-5-phosphate to ribulose 5-phosphate.</text>
</comment>
<comment type="catalytic activity">
    <reaction evidence="1">
        <text>aldehydo-D-ribose 5-phosphate = D-ribulose 5-phosphate</text>
        <dbReference type="Rhea" id="RHEA:14657"/>
        <dbReference type="ChEBI" id="CHEBI:58121"/>
        <dbReference type="ChEBI" id="CHEBI:58273"/>
        <dbReference type="EC" id="5.3.1.6"/>
    </reaction>
</comment>
<comment type="pathway">
    <text evidence="1">Carbohydrate degradation; pentose phosphate pathway; D-ribose 5-phosphate from D-ribulose 5-phosphate (non-oxidative stage): step 1/1.</text>
</comment>
<comment type="subunit">
    <text evidence="1">Homodimer.</text>
</comment>
<comment type="similarity">
    <text evidence="1">Belongs to the ribose 5-phosphate isomerase family.</text>
</comment>
<name>RPIA_PROM3</name>
<keyword id="KW-0413">Isomerase</keyword>
<evidence type="ECO:0000255" key="1">
    <source>
        <dbReference type="HAMAP-Rule" id="MF_00170"/>
    </source>
</evidence>
<gene>
    <name evidence="1" type="primary">rpiA</name>
    <name type="ordered locus">P9303_04321</name>
</gene>
<accession>A2C6S4</accession>
<organism>
    <name type="scientific">Prochlorococcus marinus (strain MIT 9303)</name>
    <dbReference type="NCBI Taxonomy" id="59922"/>
    <lineage>
        <taxon>Bacteria</taxon>
        <taxon>Bacillati</taxon>
        <taxon>Cyanobacteriota</taxon>
        <taxon>Cyanophyceae</taxon>
        <taxon>Synechococcales</taxon>
        <taxon>Prochlorococcaceae</taxon>
        <taxon>Prochlorococcus</taxon>
    </lineage>
</organism>
<reference key="1">
    <citation type="journal article" date="2007" name="PLoS Genet.">
        <title>Patterns and implications of gene gain and loss in the evolution of Prochlorococcus.</title>
        <authorList>
            <person name="Kettler G.C."/>
            <person name="Martiny A.C."/>
            <person name="Huang K."/>
            <person name="Zucker J."/>
            <person name="Coleman M.L."/>
            <person name="Rodrigue S."/>
            <person name="Chen F."/>
            <person name="Lapidus A."/>
            <person name="Ferriera S."/>
            <person name="Johnson J."/>
            <person name="Steglich C."/>
            <person name="Church G.M."/>
            <person name="Richardson P."/>
            <person name="Chisholm S.W."/>
        </authorList>
    </citation>
    <scope>NUCLEOTIDE SEQUENCE [LARGE SCALE GENOMIC DNA]</scope>
    <source>
        <strain>MIT 9303</strain>
    </source>
</reference>